<evidence type="ECO:0000255" key="1">
    <source>
        <dbReference type="HAMAP-Rule" id="MF_01039"/>
    </source>
</evidence>
<gene>
    <name evidence="1" type="primary">gpmA</name>
    <name type="synonym">gpm</name>
    <name type="synonym">gpm1</name>
    <name type="synonym">pgm</name>
    <name type="ordered locus">MT0508</name>
</gene>
<feature type="chain" id="PRO_0000428029" description="2,3-bisphosphoglycerate-dependent phosphoglycerate mutase">
    <location>
        <begin position="1"/>
        <end position="249"/>
    </location>
</feature>
<feature type="active site" description="Tele-phosphohistidine intermediate" evidence="1">
    <location>
        <position position="12"/>
    </location>
</feature>
<feature type="active site" description="Proton donor/acceptor" evidence="1">
    <location>
        <position position="90"/>
    </location>
</feature>
<feature type="binding site" evidence="1">
    <location>
        <begin position="11"/>
        <end position="18"/>
    </location>
    <ligand>
        <name>substrate</name>
    </ligand>
</feature>
<feature type="binding site" evidence="1">
    <location>
        <begin position="24"/>
        <end position="25"/>
    </location>
    <ligand>
        <name>substrate</name>
    </ligand>
</feature>
<feature type="binding site" evidence="1">
    <location>
        <position position="63"/>
    </location>
    <ligand>
        <name>substrate</name>
    </ligand>
</feature>
<feature type="binding site" evidence="1">
    <location>
        <begin position="90"/>
        <end position="93"/>
    </location>
    <ligand>
        <name>substrate</name>
    </ligand>
</feature>
<feature type="binding site" evidence="1">
    <location>
        <position position="101"/>
    </location>
    <ligand>
        <name>substrate</name>
    </ligand>
</feature>
<feature type="binding site" evidence="1">
    <location>
        <begin position="117"/>
        <end position="118"/>
    </location>
    <ligand>
        <name>substrate</name>
    </ligand>
</feature>
<feature type="binding site" evidence="1">
    <location>
        <begin position="184"/>
        <end position="185"/>
    </location>
    <ligand>
        <name>substrate</name>
    </ligand>
</feature>
<feature type="site" description="Transition state stabilizer" evidence="1">
    <location>
        <position position="183"/>
    </location>
</feature>
<sequence>MANTGSLVLLRHGESDWNALNLFTGWVDVGLTDKGQAEAVRSGELIAEHDLLPDVLYTSLLRRAITTAHLALDSADRLWIPVRRSWRLNERHYGALQGLDKAETKARYGEEQFMAWRRSYDTPPPPIERGSQFSQDADPRYADIGGGPLTECLADVVARFLPYFTDVIVGDLRVGKTVLIVAHGNSLRALVKHLDQMSDDEIVGLNIPTGIPLRYDLDSAMRPLVRGGTYLDPEAAAAGAAAVAGQGRG</sequence>
<reference key="1">
    <citation type="journal article" date="2002" name="J. Bacteriol.">
        <title>Whole-genome comparison of Mycobacterium tuberculosis clinical and laboratory strains.</title>
        <authorList>
            <person name="Fleischmann R.D."/>
            <person name="Alland D."/>
            <person name="Eisen J.A."/>
            <person name="Carpenter L."/>
            <person name="White O."/>
            <person name="Peterson J.D."/>
            <person name="DeBoy R.T."/>
            <person name="Dodson R.J."/>
            <person name="Gwinn M.L."/>
            <person name="Haft D.H."/>
            <person name="Hickey E.K."/>
            <person name="Kolonay J.F."/>
            <person name="Nelson W.C."/>
            <person name="Umayam L.A."/>
            <person name="Ermolaeva M.D."/>
            <person name="Salzberg S.L."/>
            <person name="Delcher A."/>
            <person name="Utterback T.R."/>
            <person name="Weidman J.F."/>
            <person name="Khouri H.M."/>
            <person name="Gill J."/>
            <person name="Mikula A."/>
            <person name="Bishai W."/>
            <person name="Jacobs W.R. Jr."/>
            <person name="Venter J.C."/>
            <person name="Fraser C.M."/>
        </authorList>
    </citation>
    <scope>NUCLEOTIDE SEQUENCE [LARGE SCALE GENOMIC DNA]</scope>
    <source>
        <strain>CDC 1551 / Oshkosh</strain>
    </source>
</reference>
<protein>
    <recommendedName>
        <fullName evidence="1">2,3-bisphosphoglycerate-dependent phosphoglycerate mutase</fullName>
        <shortName evidence="1">BPG-dependent PGAM</shortName>
        <shortName evidence="1">PGAM</shortName>
        <shortName evidence="1">Phosphoglyceromutase</shortName>
        <shortName evidence="1">dPGM</shortName>
        <ecNumber evidence="1">5.4.2.11</ecNumber>
    </recommendedName>
</protein>
<dbReference type="EC" id="5.4.2.11" evidence="1"/>
<dbReference type="EMBL" id="AE000516">
    <property type="protein sequence ID" value="AAK44731.1"/>
    <property type="molecule type" value="Genomic_DNA"/>
</dbReference>
<dbReference type="PIR" id="D70744">
    <property type="entry name" value="D70744"/>
</dbReference>
<dbReference type="RefSeq" id="WP_003402379.1">
    <property type="nucleotide sequence ID" value="NZ_KK341227.1"/>
</dbReference>
<dbReference type="SMR" id="P9WIC8"/>
<dbReference type="KEGG" id="mtc:MT0508"/>
<dbReference type="PATRIC" id="fig|83331.31.peg.538"/>
<dbReference type="HOGENOM" id="CLU_033323_1_1_11"/>
<dbReference type="UniPathway" id="UPA00109">
    <property type="reaction ID" value="UER00186"/>
</dbReference>
<dbReference type="Proteomes" id="UP000001020">
    <property type="component" value="Chromosome"/>
</dbReference>
<dbReference type="GO" id="GO:0004619">
    <property type="term" value="F:phosphoglycerate mutase activity"/>
    <property type="evidence" value="ECO:0007669"/>
    <property type="project" value="UniProtKB-EC"/>
</dbReference>
<dbReference type="GO" id="GO:0006094">
    <property type="term" value="P:gluconeogenesis"/>
    <property type="evidence" value="ECO:0007669"/>
    <property type="project" value="UniProtKB-UniRule"/>
</dbReference>
<dbReference type="GO" id="GO:0006096">
    <property type="term" value="P:glycolytic process"/>
    <property type="evidence" value="ECO:0007669"/>
    <property type="project" value="UniProtKB-UniRule"/>
</dbReference>
<dbReference type="CDD" id="cd07067">
    <property type="entry name" value="HP_PGM_like"/>
    <property type="match status" value="1"/>
</dbReference>
<dbReference type="FunFam" id="3.40.50.1240:FF:000012">
    <property type="entry name" value="Phosphoglycerate mutase 1"/>
    <property type="match status" value="1"/>
</dbReference>
<dbReference type="Gene3D" id="3.40.50.1240">
    <property type="entry name" value="Phosphoglycerate mutase-like"/>
    <property type="match status" value="1"/>
</dbReference>
<dbReference type="HAMAP" id="MF_01039">
    <property type="entry name" value="PGAM_GpmA"/>
    <property type="match status" value="1"/>
</dbReference>
<dbReference type="InterPro" id="IPR013078">
    <property type="entry name" value="His_Pase_superF_clade-1"/>
</dbReference>
<dbReference type="InterPro" id="IPR029033">
    <property type="entry name" value="His_PPase_superfam"/>
</dbReference>
<dbReference type="InterPro" id="IPR001345">
    <property type="entry name" value="PG/BPGM_mutase_AS"/>
</dbReference>
<dbReference type="InterPro" id="IPR005952">
    <property type="entry name" value="Phosphogly_mut1"/>
</dbReference>
<dbReference type="NCBIfam" id="TIGR01258">
    <property type="entry name" value="pgm_1"/>
    <property type="match status" value="1"/>
</dbReference>
<dbReference type="NCBIfam" id="NF010713">
    <property type="entry name" value="PRK14115.1"/>
    <property type="match status" value="1"/>
</dbReference>
<dbReference type="NCBIfam" id="NF010718">
    <property type="entry name" value="PRK14120.1"/>
    <property type="match status" value="1"/>
</dbReference>
<dbReference type="PANTHER" id="PTHR11931">
    <property type="entry name" value="PHOSPHOGLYCERATE MUTASE"/>
    <property type="match status" value="1"/>
</dbReference>
<dbReference type="Pfam" id="PF00300">
    <property type="entry name" value="His_Phos_1"/>
    <property type="match status" value="1"/>
</dbReference>
<dbReference type="PIRSF" id="PIRSF000709">
    <property type="entry name" value="6PFK_2-Ptase"/>
    <property type="match status" value="1"/>
</dbReference>
<dbReference type="SMART" id="SM00855">
    <property type="entry name" value="PGAM"/>
    <property type="match status" value="1"/>
</dbReference>
<dbReference type="SUPFAM" id="SSF53254">
    <property type="entry name" value="Phosphoglycerate mutase-like"/>
    <property type="match status" value="1"/>
</dbReference>
<dbReference type="PROSITE" id="PS00175">
    <property type="entry name" value="PG_MUTASE"/>
    <property type="match status" value="1"/>
</dbReference>
<comment type="function">
    <text evidence="1">Catalyzes the interconversion of 2-phosphoglycerate and 3-phosphoglycerate.</text>
</comment>
<comment type="catalytic activity">
    <reaction evidence="1">
        <text>(2R)-2-phosphoglycerate = (2R)-3-phosphoglycerate</text>
        <dbReference type="Rhea" id="RHEA:15901"/>
        <dbReference type="ChEBI" id="CHEBI:58272"/>
        <dbReference type="ChEBI" id="CHEBI:58289"/>
        <dbReference type="EC" id="5.4.2.11"/>
    </reaction>
</comment>
<comment type="pathway">
    <text evidence="1">Carbohydrate degradation; glycolysis; pyruvate from D-glyceraldehyde 3-phosphate: step 3/5.</text>
</comment>
<comment type="similarity">
    <text evidence="1">Belongs to the phosphoglycerate mutase family. BPG-dependent PGAM subfamily.</text>
</comment>
<accession>P9WIC8</accession>
<accession>L0T6M6</accession>
<accession>P0A5R6</accession>
<accession>Q11140</accession>
<name>GPMA_MYCTO</name>
<keyword id="KW-0312">Gluconeogenesis</keyword>
<keyword id="KW-0324">Glycolysis</keyword>
<keyword id="KW-0413">Isomerase</keyword>
<keyword id="KW-1185">Reference proteome</keyword>
<proteinExistence type="inferred from homology"/>
<organism>
    <name type="scientific">Mycobacterium tuberculosis (strain CDC 1551 / Oshkosh)</name>
    <dbReference type="NCBI Taxonomy" id="83331"/>
    <lineage>
        <taxon>Bacteria</taxon>
        <taxon>Bacillati</taxon>
        <taxon>Actinomycetota</taxon>
        <taxon>Actinomycetes</taxon>
        <taxon>Mycobacteriales</taxon>
        <taxon>Mycobacteriaceae</taxon>
        <taxon>Mycobacterium</taxon>
        <taxon>Mycobacterium tuberculosis complex</taxon>
    </lineage>
</organism>